<keyword id="KW-0238">DNA-binding</keyword>
<keyword id="KW-1185">Reference proteome</keyword>
<keyword id="KW-0804">Transcription</keyword>
<keyword id="KW-0805">Transcription regulation</keyword>
<accession>P54182</accession>
<name>YPOP_BACSU</name>
<gene>
    <name type="primary">ypoP</name>
    <name type="ordered locus">BSU21700</name>
</gene>
<protein>
    <recommendedName>
        <fullName>Uncharacterized HTH-type transcriptional regulator YpoP</fullName>
    </recommendedName>
</protein>
<reference key="1">
    <citation type="journal article" date="1996" name="Microbiology">
        <title>Organization of the Bacillus subtilis 168 chromosome between kdg and the attachment site of the SP beta prophage: use of long accurate PCR and yeast artificial chromosomes for sequencing.</title>
        <authorList>
            <person name="Capuano V."/>
            <person name="Galleron N."/>
            <person name="Pujic P."/>
            <person name="Sorokin A."/>
            <person name="Ehrlich S.D."/>
        </authorList>
    </citation>
    <scope>NUCLEOTIDE SEQUENCE [GENOMIC DNA]</scope>
    <source>
        <strain>168 / Marburg / ATCC 6051 / DSM 10 / JCM 1465 / NBRC 13719 / NCIMB 3610 / NRRL NRS-744 / VKM B-501</strain>
    </source>
</reference>
<reference key="2">
    <citation type="journal article" date="1997" name="Nature">
        <title>The complete genome sequence of the Gram-positive bacterium Bacillus subtilis.</title>
        <authorList>
            <person name="Kunst F."/>
            <person name="Ogasawara N."/>
            <person name="Moszer I."/>
            <person name="Albertini A.M."/>
            <person name="Alloni G."/>
            <person name="Azevedo V."/>
            <person name="Bertero M.G."/>
            <person name="Bessieres P."/>
            <person name="Bolotin A."/>
            <person name="Borchert S."/>
            <person name="Borriss R."/>
            <person name="Boursier L."/>
            <person name="Brans A."/>
            <person name="Braun M."/>
            <person name="Brignell S.C."/>
            <person name="Bron S."/>
            <person name="Brouillet S."/>
            <person name="Bruschi C.V."/>
            <person name="Caldwell B."/>
            <person name="Capuano V."/>
            <person name="Carter N.M."/>
            <person name="Choi S.-K."/>
            <person name="Codani J.-J."/>
            <person name="Connerton I.F."/>
            <person name="Cummings N.J."/>
            <person name="Daniel R.A."/>
            <person name="Denizot F."/>
            <person name="Devine K.M."/>
            <person name="Duesterhoeft A."/>
            <person name="Ehrlich S.D."/>
            <person name="Emmerson P.T."/>
            <person name="Entian K.-D."/>
            <person name="Errington J."/>
            <person name="Fabret C."/>
            <person name="Ferrari E."/>
            <person name="Foulger D."/>
            <person name="Fritz C."/>
            <person name="Fujita M."/>
            <person name="Fujita Y."/>
            <person name="Fuma S."/>
            <person name="Galizzi A."/>
            <person name="Galleron N."/>
            <person name="Ghim S.-Y."/>
            <person name="Glaser P."/>
            <person name="Goffeau A."/>
            <person name="Golightly E.J."/>
            <person name="Grandi G."/>
            <person name="Guiseppi G."/>
            <person name="Guy B.J."/>
            <person name="Haga K."/>
            <person name="Haiech J."/>
            <person name="Harwood C.R."/>
            <person name="Henaut A."/>
            <person name="Hilbert H."/>
            <person name="Holsappel S."/>
            <person name="Hosono S."/>
            <person name="Hullo M.-F."/>
            <person name="Itaya M."/>
            <person name="Jones L.-M."/>
            <person name="Joris B."/>
            <person name="Karamata D."/>
            <person name="Kasahara Y."/>
            <person name="Klaerr-Blanchard M."/>
            <person name="Klein C."/>
            <person name="Kobayashi Y."/>
            <person name="Koetter P."/>
            <person name="Koningstein G."/>
            <person name="Krogh S."/>
            <person name="Kumano M."/>
            <person name="Kurita K."/>
            <person name="Lapidus A."/>
            <person name="Lardinois S."/>
            <person name="Lauber J."/>
            <person name="Lazarevic V."/>
            <person name="Lee S.-M."/>
            <person name="Levine A."/>
            <person name="Liu H."/>
            <person name="Masuda S."/>
            <person name="Mauel C."/>
            <person name="Medigue C."/>
            <person name="Medina N."/>
            <person name="Mellado R.P."/>
            <person name="Mizuno M."/>
            <person name="Moestl D."/>
            <person name="Nakai S."/>
            <person name="Noback M."/>
            <person name="Noone D."/>
            <person name="O'Reilly M."/>
            <person name="Ogawa K."/>
            <person name="Ogiwara A."/>
            <person name="Oudega B."/>
            <person name="Park S.-H."/>
            <person name="Parro V."/>
            <person name="Pohl T.M."/>
            <person name="Portetelle D."/>
            <person name="Porwollik S."/>
            <person name="Prescott A.M."/>
            <person name="Presecan E."/>
            <person name="Pujic P."/>
            <person name="Purnelle B."/>
            <person name="Rapoport G."/>
            <person name="Rey M."/>
            <person name="Reynolds S."/>
            <person name="Rieger M."/>
            <person name="Rivolta C."/>
            <person name="Rocha E."/>
            <person name="Roche B."/>
            <person name="Rose M."/>
            <person name="Sadaie Y."/>
            <person name="Sato T."/>
            <person name="Scanlan E."/>
            <person name="Schleich S."/>
            <person name="Schroeter R."/>
            <person name="Scoffone F."/>
            <person name="Sekiguchi J."/>
            <person name="Sekowska A."/>
            <person name="Seror S.J."/>
            <person name="Serror P."/>
            <person name="Shin B.-S."/>
            <person name="Soldo B."/>
            <person name="Sorokin A."/>
            <person name="Tacconi E."/>
            <person name="Takagi T."/>
            <person name="Takahashi H."/>
            <person name="Takemaru K."/>
            <person name="Takeuchi M."/>
            <person name="Tamakoshi A."/>
            <person name="Tanaka T."/>
            <person name="Terpstra P."/>
            <person name="Tognoni A."/>
            <person name="Tosato V."/>
            <person name="Uchiyama S."/>
            <person name="Vandenbol M."/>
            <person name="Vannier F."/>
            <person name="Vassarotti A."/>
            <person name="Viari A."/>
            <person name="Wambutt R."/>
            <person name="Wedler E."/>
            <person name="Wedler H."/>
            <person name="Weitzenegger T."/>
            <person name="Winters P."/>
            <person name="Wipat A."/>
            <person name="Yamamoto H."/>
            <person name="Yamane K."/>
            <person name="Yasumoto K."/>
            <person name="Yata K."/>
            <person name="Yoshida K."/>
            <person name="Yoshikawa H.-F."/>
            <person name="Zumstein E."/>
            <person name="Yoshikawa H."/>
            <person name="Danchin A."/>
        </authorList>
    </citation>
    <scope>NUCLEOTIDE SEQUENCE [LARGE SCALE GENOMIC DNA]</scope>
    <source>
        <strain>168</strain>
    </source>
</reference>
<evidence type="ECO:0000255" key="1">
    <source>
        <dbReference type="PROSITE-ProRule" id="PRU00345"/>
    </source>
</evidence>
<feature type="chain" id="PRO_0000054402" description="Uncharacterized HTH-type transcriptional regulator YpoP">
    <location>
        <begin position="1"/>
        <end position="141"/>
    </location>
</feature>
<feature type="domain" description="HTH marR-type" evidence="1">
    <location>
        <begin position="4"/>
        <end position="139"/>
    </location>
</feature>
<feature type="DNA-binding region" description="H-T-H motif" evidence="1">
    <location>
        <begin position="53"/>
        <end position="76"/>
    </location>
</feature>
<organism>
    <name type="scientific">Bacillus subtilis (strain 168)</name>
    <dbReference type="NCBI Taxonomy" id="224308"/>
    <lineage>
        <taxon>Bacteria</taxon>
        <taxon>Bacillati</taxon>
        <taxon>Bacillota</taxon>
        <taxon>Bacilli</taxon>
        <taxon>Bacillales</taxon>
        <taxon>Bacillaceae</taxon>
        <taxon>Bacillus</taxon>
    </lineage>
</organism>
<sequence>MKVRTQMMYDMETLLRKVFKQIRNEINEILDKELSRNEFTILRILSEQGPKKVTEFAPILEVSASHITAVTDALVEKEWITRIRSKEDRRIIRIHITEAGEKVLQHFNEKKTEYFFKRFDCYTDAELATLIELFSKLDKKR</sequence>
<proteinExistence type="predicted"/>
<dbReference type="EMBL" id="L77246">
    <property type="protein sequence ID" value="AAA96646.1"/>
    <property type="molecule type" value="Genomic_DNA"/>
</dbReference>
<dbReference type="EMBL" id="AL009126">
    <property type="protein sequence ID" value="CAB14088.1"/>
    <property type="molecule type" value="Genomic_DNA"/>
</dbReference>
<dbReference type="PIR" id="F69939">
    <property type="entry name" value="F69939"/>
</dbReference>
<dbReference type="RefSeq" id="NP_390053.1">
    <property type="nucleotide sequence ID" value="NC_000964.3"/>
</dbReference>
<dbReference type="RefSeq" id="WP_004398634.1">
    <property type="nucleotide sequence ID" value="NZ_OZ025638.1"/>
</dbReference>
<dbReference type="SMR" id="P54182"/>
<dbReference type="FunCoup" id="P54182">
    <property type="interactions" value="16"/>
</dbReference>
<dbReference type="STRING" id="224308.BSU21700"/>
<dbReference type="jPOST" id="P54182"/>
<dbReference type="PaxDb" id="224308-BSU21700"/>
<dbReference type="EnsemblBacteria" id="CAB14088">
    <property type="protein sequence ID" value="CAB14088"/>
    <property type="gene ID" value="BSU_21700"/>
</dbReference>
<dbReference type="GeneID" id="939103"/>
<dbReference type="KEGG" id="bsu:BSU21700"/>
<dbReference type="PATRIC" id="fig|224308.179.peg.2371"/>
<dbReference type="eggNOG" id="COG1846">
    <property type="taxonomic scope" value="Bacteria"/>
</dbReference>
<dbReference type="InParanoid" id="P54182"/>
<dbReference type="OrthoDB" id="288929at2"/>
<dbReference type="PhylomeDB" id="P54182"/>
<dbReference type="BioCyc" id="BSUB:BSU21700-MONOMER"/>
<dbReference type="Proteomes" id="UP000001570">
    <property type="component" value="Chromosome"/>
</dbReference>
<dbReference type="GO" id="GO:0003677">
    <property type="term" value="F:DNA binding"/>
    <property type="evidence" value="ECO:0007669"/>
    <property type="project" value="UniProtKB-KW"/>
</dbReference>
<dbReference type="GO" id="GO:0003700">
    <property type="term" value="F:DNA-binding transcription factor activity"/>
    <property type="evidence" value="ECO:0007669"/>
    <property type="project" value="InterPro"/>
</dbReference>
<dbReference type="GO" id="GO:0006355">
    <property type="term" value="P:regulation of DNA-templated transcription"/>
    <property type="evidence" value="ECO:0000318"/>
    <property type="project" value="GO_Central"/>
</dbReference>
<dbReference type="GO" id="GO:0006950">
    <property type="term" value="P:response to stress"/>
    <property type="evidence" value="ECO:0000318"/>
    <property type="project" value="GO_Central"/>
</dbReference>
<dbReference type="Gene3D" id="1.10.10.10">
    <property type="entry name" value="Winged helix-like DNA-binding domain superfamily/Winged helix DNA-binding domain"/>
    <property type="match status" value="1"/>
</dbReference>
<dbReference type="InterPro" id="IPR000835">
    <property type="entry name" value="HTH_MarR-typ"/>
</dbReference>
<dbReference type="InterPro" id="IPR039422">
    <property type="entry name" value="MarR/SlyA-like"/>
</dbReference>
<dbReference type="InterPro" id="IPR036388">
    <property type="entry name" value="WH-like_DNA-bd_sf"/>
</dbReference>
<dbReference type="InterPro" id="IPR036390">
    <property type="entry name" value="WH_DNA-bd_sf"/>
</dbReference>
<dbReference type="PANTHER" id="PTHR33164">
    <property type="entry name" value="TRANSCRIPTIONAL REGULATOR, MARR FAMILY"/>
    <property type="match status" value="1"/>
</dbReference>
<dbReference type="PANTHER" id="PTHR33164:SF67">
    <property type="entry name" value="TRANSCRIPTIONAL REGULATOR, MARR FAMILY"/>
    <property type="match status" value="1"/>
</dbReference>
<dbReference type="Pfam" id="PF01047">
    <property type="entry name" value="MarR"/>
    <property type="match status" value="1"/>
</dbReference>
<dbReference type="PRINTS" id="PR00598">
    <property type="entry name" value="HTHMARR"/>
</dbReference>
<dbReference type="SMART" id="SM00347">
    <property type="entry name" value="HTH_MARR"/>
    <property type="match status" value="1"/>
</dbReference>
<dbReference type="SUPFAM" id="SSF46785">
    <property type="entry name" value="Winged helix' DNA-binding domain"/>
    <property type="match status" value="1"/>
</dbReference>
<dbReference type="PROSITE" id="PS50995">
    <property type="entry name" value="HTH_MARR_2"/>
    <property type="match status" value="1"/>
</dbReference>